<accession>Q65JH6</accession>
<accession>Q62UY1</accession>
<reference key="1">
    <citation type="journal article" date="2004" name="J. Mol. Microbiol. Biotechnol.">
        <title>The complete genome sequence of Bacillus licheniformis DSM13, an organism with great industrial potential.</title>
        <authorList>
            <person name="Veith B."/>
            <person name="Herzberg C."/>
            <person name="Steckel S."/>
            <person name="Feesche J."/>
            <person name="Maurer K.H."/>
            <person name="Ehrenreich P."/>
            <person name="Baeumer S."/>
            <person name="Henne A."/>
            <person name="Liesegang H."/>
            <person name="Merkl R."/>
            <person name="Ehrenreich A."/>
            <person name="Gottschalk G."/>
        </authorList>
    </citation>
    <scope>NUCLEOTIDE SEQUENCE [LARGE SCALE GENOMIC DNA]</scope>
    <source>
        <strain>ATCC 14580 / DSM 13 / JCM 2505 / CCUG 7422 / NBRC 12200 / NCIMB 9375 / NCTC 10341 / NRRL NRS-1264 / Gibson 46</strain>
    </source>
</reference>
<reference key="2">
    <citation type="journal article" date="2004" name="Genome Biol.">
        <title>Complete genome sequence of the industrial bacterium Bacillus licheniformis and comparisons with closely related Bacillus species.</title>
        <authorList>
            <person name="Rey M.W."/>
            <person name="Ramaiya P."/>
            <person name="Nelson B.A."/>
            <person name="Brody-Karpin S.D."/>
            <person name="Zaretsky E.J."/>
            <person name="Tang M."/>
            <person name="Lopez de Leon A."/>
            <person name="Xiang H."/>
            <person name="Gusti V."/>
            <person name="Clausen I.G."/>
            <person name="Olsen P.B."/>
            <person name="Rasmussen M.D."/>
            <person name="Andersen J.T."/>
            <person name="Joergensen P.L."/>
            <person name="Larsen T.S."/>
            <person name="Sorokin A."/>
            <person name="Bolotin A."/>
            <person name="Lapidus A."/>
            <person name="Galleron N."/>
            <person name="Ehrlich S.D."/>
            <person name="Berka R.M."/>
        </authorList>
    </citation>
    <scope>NUCLEOTIDE SEQUENCE [LARGE SCALE GENOMIC DNA]</scope>
    <source>
        <strain>ATCC 14580 / DSM 13 / JCM 2505 / CCUG 7422 / NBRC 12200 / NCIMB 9375 / NCTC 10341 / NRRL NRS-1264 / Gibson 46</strain>
    </source>
</reference>
<dbReference type="EMBL" id="AE017333">
    <property type="protein sequence ID" value="AAU40788.1"/>
    <property type="molecule type" value="Genomic_DNA"/>
</dbReference>
<dbReference type="EMBL" id="CP000002">
    <property type="protein sequence ID" value="AAU23428.1"/>
    <property type="molecule type" value="Genomic_DNA"/>
</dbReference>
<dbReference type="RefSeq" id="WP_003181879.1">
    <property type="nucleotide sequence ID" value="NC_006322.1"/>
</dbReference>
<dbReference type="SMR" id="Q65JH6"/>
<dbReference type="STRING" id="279010.BL01219"/>
<dbReference type="GeneID" id="92861514"/>
<dbReference type="KEGG" id="bld:BLi01893"/>
<dbReference type="KEGG" id="bli:BL01219"/>
<dbReference type="eggNOG" id="COG0184">
    <property type="taxonomic scope" value="Bacteria"/>
</dbReference>
<dbReference type="HOGENOM" id="CLU_148518_0_0_9"/>
<dbReference type="Proteomes" id="UP000000606">
    <property type="component" value="Chromosome"/>
</dbReference>
<dbReference type="GO" id="GO:0022627">
    <property type="term" value="C:cytosolic small ribosomal subunit"/>
    <property type="evidence" value="ECO:0007669"/>
    <property type="project" value="TreeGrafter"/>
</dbReference>
<dbReference type="GO" id="GO:0019843">
    <property type="term" value="F:rRNA binding"/>
    <property type="evidence" value="ECO:0007669"/>
    <property type="project" value="UniProtKB-UniRule"/>
</dbReference>
<dbReference type="GO" id="GO:0003735">
    <property type="term" value="F:structural constituent of ribosome"/>
    <property type="evidence" value="ECO:0007669"/>
    <property type="project" value="InterPro"/>
</dbReference>
<dbReference type="GO" id="GO:0006412">
    <property type="term" value="P:translation"/>
    <property type="evidence" value="ECO:0007669"/>
    <property type="project" value="UniProtKB-UniRule"/>
</dbReference>
<dbReference type="CDD" id="cd00353">
    <property type="entry name" value="Ribosomal_S15p_S13e"/>
    <property type="match status" value="1"/>
</dbReference>
<dbReference type="FunFam" id="1.10.287.10:FF:000002">
    <property type="entry name" value="30S ribosomal protein S15"/>
    <property type="match status" value="1"/>
</dbReference>
<dbReference type="Gene3D" id="6.10.250.3130">
    <property type="match status" value="1"/>
</dbReference>
<dbReference type="Gene3D" id="1.10.287.10">
    <property type="entry name" value="S15/NS1, RNA-binding"/>
    <property type="match status" value="1"/>
</dbReference>
<dbReference type="HAMAP" id="MF_01343_B">
    <property type="entry name" value="Ribosomal_uS15_B"/>
    <property type="match status" value="1"/>
</dbReference>
<dbReference type="InterPro" id="IPR000589">
    <property type="entry name" value="Ribosomal_uS15"/>
</dbReference>
<dbReference type="InterPro" id="IPR005290">
    <property type="entry name" value="Ribosomal_uS15_bac-type"/>
</dbReference>
<dbReference type="InterPro" id="IPR009068">
    <property type="entry name" value="uS15_NS1_RNA-bd_sf"/>
</dbReference>
<dbReference type="NCBIfam" id="TIGR00952">
    <property type="entry name" value="S15_bact"/>
    <property type="match status" value="1"/>
</dbReference>
<dbReference type="PANTHER" id="PTHR23321">
    <property type="entry name" value="RIBOSOMAL PROTEIN S15, BACTERIAL AND ORGANELLAR"/>
    <property type="match status" value="1"/>
</dbReference>
<dbReference type="PANTHER" id="PTHR23321:SF26">
    <property type="entry name" value="SMALL RIBOSOMAL SUBUNIT PROTEIN US15M"/>
    <property type="match status" value="1"/>
</dbReference>
<dbReference type="Pfam" id="PF00312">
    <property type="entry name" value="Ribosomal_S15"/>
    <property type="match status" value="1"/>
</dbReference>
<dbReference type="SMART" id="SM01387">
    <property type="entry name" value="Ribosomal_S15"/>
    <property type="match status" value="1"/>
</dbReference>
<dbReference type="SUPFAM" id="SSF47060">
    <property type="entry name" value="S15/NS1 RNA-binding domain"/>
    <property type="match status" value="1"/>
</dbReference>
<dbReference type="PROSITE" id="PS00362">
    <property type="entry name" value="RIBOSOMAL_S15"/>
    <property type="match status" value="1"/>
</dbReference>
<comment type="function">
    <text evidence="1">One of the primary rRNA binding proteins, it binds directly to 16S rRNA where it helps nucleate assembly of the platform of the 30S subunit by binding and bridging several RNA helices of the 16S rRNA.</text>
</comment>
<comment type="function">
    <text evidence="1">Forms an intersubunit bridge (bridge B4) with the 23S rRNA of the 50S subunit in the ribosome.</text>
</comment>
<comment type="subunit">
    <text evidence="1">Part of the 30S ribosomal subunit. Forms a bridge to the 50S subunit in the 70S ribosome, contacting the 23S rRNA.</text>
</comment>
<comment type="similarity">
    <text evidence="1">Belongs to the universal ribosomal protein uS15 family.</text>
</comment>
<name>RS15_BACLD</name>
<protein>
    <recommendedName>
        <fullName evidence="1">Small ribosomal subunit protein uS15</fullName>
    </recommendedName>
    <alternativeName>
        <fullName evidence="2">30S ribosomal protein S15</fullName>
    </alternativeName>
</protein>
<sequence>MAITQERKTQLINEFKTHESDTGSPEVQIAILTDQINNLNEHLRTHKKDHHSRRGLLKMVGKRRNLLTYLRNKDVTRYRELINKLGLRR</sequence>
<keyword id="KW-1185">Reference proteome</keyword>
<keyword id="KW-0687">Ribonucleoprotein</keyword>
<keyword id="KW-0689">Ribosomal protein</keyword>
<keyword id="KW-0694">RNA-binding</keyword>
<keyword id="KW-0699">rRNA-binding</keyword>
<evidence type="ECO:0000255" key="1">
    <source>
        <dbReference type="HAMAP-Rule" id="MF_01343"/>
    </source>
</evidence>
<evidence type="ECO:0000305" key="2"/>
<gene>
    <name evidence="1" type="primary">rpsO</name>
    <name type="ordered locus">BLi01893</name>
    <name type="ordered locus">BL01219</name>
</gene>
<organism>
    <name type="scientific">Bacillus licheniformis (strain ATCC 14580 / DSM 13 / JCM 2505 / CCUG 7422 / NBRC 12200 / NCIMB 9375 / NCTC 10341 / NRRL NRS-1264 / Gibson 46)</name>
    <dbReference type="NCBI Taxonomy" id="279010"/>
    <lineage>
        <taxon>Bacteria</taxon>
        <taxon>Bacillati</taxon>
        <taxon>Bacillota</taxon>
        <taxon>Bacilli</taxon>
        <taxon>Bacillales</taxon>
        <taxon>Bacillaceae</taxon>
        <taxon>Bacillus</taxon>
    </lineage>
</organism>
<proteinExistence type="inferred from homology"/>
<feature type="chain" id="PRO_0000115379" description="Small ribosomal subunit protein uS15">
    <location>
        <begin position="1"/>
        <end position="89"/>
    </location>
</feature>